<proteinExistence type="predicted"/>
<evidence type="ECO:0000255" key="1">
    <source>
        <dbReference type="PROSITE-ProRule" id="PRU00176"/>
    </source>
</evidence>
<evidence type="ECO:0000256" key="2">
    <source>
        <dbReference type="SAM" id="MobiDB-lite"/>
    </source>
</evidence>
<evidence type="ECO:0000269" key="3">
    <source>
    </source>
</evidence>
<accession>Q9P6P7</accession>
<sequence>MNPSCVVYVGNIPYEMAEEQVIDIFKQSGPVKSFQLVIDPESGQPKGYGFCEYHDPATAASAVRNLNNYDAGTRRLRVDFPTADQIRRLDKLLGPSRYGYYPQSYANQSYTYGNNFGSYPPTQPSTQPLPQSYGYPSYPPAGYRGGSARPSGVLANDEVYRVLAQLAPNEIDYMLSAIKALCLEAPEQAAQLFETNPQLSYAVFQAMLMKRYTSESVVADLLIPAGVNLPGAQEPNRGYFSPMHTYSSAVPGPISVPSAPYGRASSTIAEVSPMYGSHAAPYASTPSAAVGSSRGSTPASATVPISPARGFPTTSAYNPAPPAYGMANPAYGSTGIRSSSIPSSGSIRSPSLTTTSAQATTNATNNITTTTAAQDENATKAALIAQLMALTDDQINVLPPDQKERILQIRQALPSSYKTESK</sequence>
<feature type="chain" id="PRO_0000310814" description="Uncharacterized RNA-binding protein C644.16">
    <location>
        <begin position="1"/>
        <end position="422"/>
    </location>
</feature>
<feature type="domain" description="RRM" evidence="1">
    <location>
        <begin position="5"/>
        <end position="83"/>
    </location>
</feature>
<feature type="region of interest" description="Disordered" evidence="2">
    <location>
        <begin position="337"/>
        <end position="358"/>
    </location>
</feature>
<name>YKCG_SCHPO</name>
<gene>
    <name type="ORF">SPAC644.16</name>
</gene>
<protein>
    <recommendedName>
        <fullName>Uncharacterized RNA-binding protein C644.16</fullName>
    </recommendedName>
</protein>
<keyword id="KW-0539">Nucleus</keyword>
<keyword id="KW-1185">Reference proteome</keyword>
<keyword id="KW-0694">RNA-binding</keyword>
<reference key="1">
    <citation type="journal article" date="2002" name="Nature">
        <title>The genome sequence of Schizosaccharomyces pombe.</title>
        <authorList>
            <person name="Wood V."/>
            <person name="Gwilliam R."/>
            <person name="Rajandream M.A."/>
            <person name="Lyne M.H."/>
            <person name="Lyne R."/>
            <person name="Stewart A."/>
            <person name="Sgouros J.G."/>
            <person name="Peat N."/>
            <person name="Hayles J."/>
            <person name="Baker S.G."/>
            <person name="Basham D."/>
            <person name="Bowman S."/>
            <person name="Brooks K."/>
            <person name="Brown D."/>
            <person name="Brown S."/>
            <person name="Chillingworth T."/>
            <person name="Churcher C.M."/>
            <person name="Collins M."/>
            <person name="Connor R."/>
            <person name="Cronin A."/>
            <person name="Davis P."/>
            <person name="Feltwell T."/>
            <person name="Fraser A."/>
            <person name="Gentles S."/>
            <person name="Goble A."/>
            <person name="Hamlin N."/>
            <person name="Harris D.E."/>
            <person name="Hidalgo J."/>
            <person name="Hodgson G."/>
            <person name="Holroyd S."/>
            <person name="Hornsby T."/>
            <person name="Howarth S."/>
            <person name="Huckle E.J."/>
            <person name="Hunt S."/>
            <person name="Jagels K."/>
            <person name="James K.D."/>
            <person name="Jones L."/>
            <person name="Jones M."/>
            <person name="Leather S."/>
            <person name="McDonald S."/>
            <person name="McLean J."/>
            <person name="Mooney P."/>
            <person name="Moule S."/>
            <person name="Mungall K.L."/>
            <person name="Murphy L.D."/>
            <person name="Niblett D."/>
            <person name="Odell C."/>
            <person name="Oliver K."/>
            <person name="O'Neil S."/>
            <person name="Pearson D."/>
            <person name="Quail M.A."/>
            <person name="Rabbinowitsch E."/>
            <person name="Rutherford K.M."/>
            <person name="Rutter S."/>
            <person name="Saunders D."/>
            <person name="Seeger K."/>
            <person name="Sharp S."/>
            <person name="Skelton J."/>
            <person name="Simmonds M.N."/>
            <person name="Squares R."/>
            <person name="Squares S."/>
            <person name="Stevens K."/>
            <person name="Taylor K."/>
            <person name="Taylor R.G."/>
            <person name="Tivey A."/>
            <person name="Walsh S.V."/>
            <person name="Warren T."/>
            <person name="Whitehead S."/>
            <person name="Woodward J.R."/>
            <person name="Volckaert G."/>
            <person name="Aert R."/>
            <person name="Robben J."/>
            <person name="Grymonprez B."/>
            <person name="Weltjens I."/>
            <person name="Vanstreels E."/>
            <person name="Rieger M."/>
            <person name="Schaefer M."/>
            <person name="Mueller-Auer S."/>
            <person name="Gabel C."/>
            <person name="Fuchs M."/>
            <person name="Duesterhoeft A."/>
            <person name="Fritzc C."/>
            <person name="Holzer E."/>
            <person name="Moestl D."/>
            <person name="Hilbert H."/>
            <person name="Borzym K."/>
            <person name="Langer I."/>
            <person name="Beck A."/>
            <person name="Lehrach H."/>
            <person name="Reinhardt R."/>
            <person name="Pohl T.M."/>
            <person name="Eger P."/>
            <person name="Zimmermann W."/>
            <person name="Wedler H."/>
            <person name="Wambutt R."/>
            <person name="Purnelle B."/>
            <person name="Goffeau A."/>
            <person name="Cadieu E."/>
            <person name="Dreano S."/>
            <person name="Gloux S."/>
            <person name="Lelaure V."/>
            <person name="Mottier S."/>
            <person name="Galibert F."/>
            <person name="Aves S.J."/>
            <person name="Xiang Z."/>
            <person name="Hunt C."/>
            <person name="Moore K."/>
            <person name="Hurst S.M."/>
            <person name="Lucas M."/>
            <person name="Rochet M."/>
            <person name="Gaillardin C."/>
            <person name="Tallada V.A."/>
            <person name="Garzon A."/>
            <person name="Thode G."/>
            <person name="Daga R.R."/>
            <person name="Cruzado L."/>
            <person name="Jimenez J."/>
            <person name="Sanchez M."/>
            <person name="del Rey F."/>
            <person name="Benito J."/>
            <person name="Dominguez A."/>
            <person name="Revuelta J.L."/>
            <person name="Moreno S."/>
            <person name="Armstrong J."/>
            <person name="Forsburg S.L."/>
            <person name="Cerutti L."/>
            <person name="Lowe T."/>
            <person name="McCombie W.R."/>
            <person name="Paulsen I."/>
            <person name="Potashkin J."/>
            <person name="Shpakovski G.V."/>
            <person name="Ussery D."/>
            <person name="Barrell B.G."/>
            <person name="Nurse P."/>
        </authorList>
    </citation>
    <scope>NUCLEOTIDE SEQUENCE [LARGE SCALE GENOMIC DNA]</scope>
    <source>
        <strain>972 / ATCC 24843</strain>
    </source>
</reference>
<reference key="2">
    <citation type="journal article" date="2006" name="Nat. Biotechnol.">
        <title>ORFeome cloning and global analysis of protein localization in the fission yeast Schizosaccharomyces pombe.</title>
        <authorList>
            <person name="Matsuyama A."/>
            <person name="Arai R."/>
            <person name="Yashiroda Y."/>
            <person name="Shirai A."/>
            <person name="Kamata A."/>
            <person name="Sekido S."/>
            <person name="Kobayashi Y."/>
            <person name="Hashimoto A."/>
            <person name="Hamamoto M."/>
            <person name="Hiraoka Y."/>
            <person name="Horinouchi S."/>
            <person name="Yoshida M."/>
        </authorList>
    </citation>
    <scope>SUBCELLULAR LOCATION [LARGE SCALE ANALYSIS]</scope>
</reference>
<comment type="subcellular location">
    <subcellularLocation>
        <location evidence="3">Nucleus</location>
    </subcellularLocation>
</comment>
<organism>
    <name type="scientific">Schizosaccharomyces pombe (strain 972 / ATCC 24843)</name>
    <name type="common">Fission yeast</name>
    <dbReference type="NCBI Taxonomy" id="284812"/>
    <lineage>
        <taxon>Eukaryota</taxon>
        <taxon>Fungi</taxon>
        <taxon>Dikarya</taxon>
        <taxon>Ascomycota</taxon>
        <taxon>Taphrinomycotina</taxon>
        <taxon>Schizosaccharomycetes</taxon>
        <taxon>Schizosaccharomycetales</taxon>
        <taxon>Schizosaccharomycetaceae</taxon>
        <taxon>Schizosaccharomyces</taxon>
    </lineage>
</organism>
<dbReference type="EMBL" id="CU329670">
    <property type="protein sequence ID" value="CAB90143.1"/>
    <property type="molecule type" value="Genomic_DNA"/>
</dbReference>
<dbReference type="SMR" id="Q9P6P7"/>
<dbReference type="BioGRID" id="279882">
    <property type="interactions" value="8"/>
</dbReference>
<dbReference type="FunCoup" id="Q9P6P7">
    <property type="interactions" value="348"/>
</dbReference>
<dbReference type="STRING" id="284812.Q9P6P7"/>
<dbReference type="iPTMnet" id="Q9P6P7"/>
<dbReference type="PaxDb" id="4896-SPAC644.16.1"/>
<dbReference type="EnsemblFungi" id="SPAC644.16.1">
    <property type="protein sequence ID" value="SPAC644.16.1:pep"/>
    <property type="gene ID" value="SPAC644.16"/>
</dbReference>
<dbReference type="KEGG" id="spo:2543462"/>
<dbReference type="PomBase" id="SPAC644.16"/>
<dbReference type="VEuPathDB" id="FungiDB:SPAC644.16"/>
<dbReference type="eggNOG" id="KOG0108">
    <property type="taxonomic scope" value="Eukaryota"/>
</dbReference>
<dbReference type="HOGENOM" id="CLU_028601_0_0_1"/>
<dbReference type="InParanoid" id="Q9P6P7"/>
<dbReference type="OMA" id="CEPEDAP"/>
<dbReference type="PhylomeDB" id="Q9P6P7"/>
<dbReference type="PRO" id="PR:Q9P6P7"/>
<dbReference type="Proteomes" id="UP000002485">
    <property type="component" value="Chromosome I"/>
</dbReference>
<dbReference type="GO" id="GO:0033620">
    <property type="term" value="C:Mei2 nuclear dot complex"/>
    <property type="evidence" value="ECO:0000314"/>
    <property type="project" value="PomBase"/>
</dbReference>
<dbReference type="GO" id="GO:0005847">
    <property type="term" value="C:mRNA cleavage and polyadenylation specificity factor complex"/>
    <property type="evidence" value="ECO:0000318"/>
    <property type="project" value="GO_Central"/>
</dbReference>
<dbReference type="GO" id="GO:0005848">
    <property type="term" value="C:mRNA cleavage stimulating factor complex"/>
    <property type="evidence" value="ECO:0000266"/>
    <property type="project" value="PomBase"/>
</dbReference>
<dbReference type="GO" id="GO:0005634">
    <property type="term" value="C:nucleus"/>
    <property type="evidence" value="ECO:0007005"/>
    <property type="project" value="PomBase"/>
</dbReference>
<dbReference type="GO" id="GO:0003729">
    <property type="term" value="F:mRNA binding"/>
    <property type="evidence" value="ECO:0000318"/>
    <property type="project" value="GO_Central"/>
</dbReference>
<dbReference type="GO" id="GO:0180010">
    <property type="term" value="P:co-transcriptional mRNA 3'-end processing, cleavage and polyadenylation pathway"/>
    <property type="evidence" value="ECO:0000305"/>
    <property type="project" value="PomBase"/>
</dbReference>
<dbReference type="GO" id="GO:0033621">
    <property type="term" value="P:nuclear mRNA surveillance of meiosis-specific transcripts"/>
    <property type="evidence" value="ECO:0000315"/>
    <property type="project" value="PomBase"/>
</dbReference>
<dbReference type="CDD" id="cd12398">
    <property type="entry name" value="RRM_CSTF2_RNA15_like"/>
    <property type="match status" value="1"/>
</dbReference>
<dbReference type="FunFam" id="3.30.70.330:FF:001102">
    <property type="entry name" value="Cleavage and Polyadenylation Factor"/>
    <property type="match status" value="1"/>
</dbReference>
<dbReference type="FunFam" id="1.25.40.630:FF:000006">
    <property type="entry name" value="Cleavage and termination factor 1"/>
    <property type="match status" value="1"/>
</dbReference>
<dbReference type="FunFam" id="1.10.20.70:FF:000001">
    <property type="entry name" value="Cleavage stimulation factor subunit 2"/>
    <property type="match status" value="1"/>
</dbReference>
<dbReference type="Gene3D" id="1.25.40.630">
    <property type="match status" value="1"/>
</dbReference>
<dbReference type="Gene3D" id="3.30.70.330">
    <property type="match status" value="1"/>
</dbReference>
<dbReference type="Gene3D" id="1.10.20.70">
    <property type="entry name" value="Transcription termination and cleavage factor, C-terminal domain"/>
    <property type="match status" value="1"/>
</dbReference>
<dbReference type="InterPro" id="IPR025742">
    <property type="entry name" value="CSTF2_hinge"/>
</dbReference>
<dbReference type="InterPro" id="IPR026896">
    <property type="entry name" value="CSTF_C"/>
</dbReference>
<dbReference type="InterPro" id="IPR038192">
    <property type="entry name" value="CSTF_C_sf"/>
</dbReference>
<dbReference type="InterPro" id="IPR012677">
    <property type="entry name" value="Nucleotide-bd_a/b_plait_sf"/>
</dbReference>
<dbReference type="InterPro" id="IPR035979">
    <property type="entry name" value="RBD_domain_sf"/>
</dbReference>
<dbReference type="InterPro" id="IPR000504">
    <property type="entry name" value="RRM_dom"/>
</dbReference>
<dbReference type="PANTHER" id="PTHR45735">
    <property type="entry name" value="CLEAVAGE STIMULATION FACTOR SUBUNIT 2"/>
    <property type="match status" value="1"/>
</dbReference>
<dbReference type="PANTHER" id="PTHR45735:SF14">
    <property type="entry name" value="RNA-BINDING PROTEIN"/>
    <property type="match status" value="1"/>
</dbReference>
<dbReference type="Pfam" id="PF14327">
    <property type="entry name" value="CSTF2_hinge"/>
    <property type="match status" value="1"/>
</dbReference>
<dbReference type="Pfam" id="PF14304">
    <property type="entry name" value="CSTF_C"/>
    <property type="match status" value="1"/>
</dbReference>
<dbReference type="Pfam" id="PF00076">
    <property type="entry name" value="RRM_1"/>
    <property type="match status" value="1"/>
</dbReference>
<dbReference type="SMART" id="SM00360">
    <property type="entry name" value="RRM"/>
    <property type="match status" value="1"/>
</dbReference>
<dbReference type="SUPFAM" id="SSF54928">
    <property type="entry name" value="RNA-binding domain, RBD"/>
    <property type="match status" value="1"/>
</dbReference>
<dbReference type="PROSITE" id="PS50102">
    <property type="entry name" value="RRM"/>
    <property type="match status" value="1"/>
</dbReference>